<gene>
    <name evidence="8" type="primary">rpz</name>
</gene>
<keyword id="KW-0472">Membrane</keyword>
<keyword id="KW-1185">Reference proteome</keyword>
<keyword id="KW-0812">Transmembrane</keyword>
<keyword id="KW-1133">Transmembrane helix</keyword>
<feature type="chain" id="PRO_0000444989" description="Protein rapunzel">
    <location>
        <begin position="1"/>
        <end position="227"/>
    </location>
</feature>
<feature type="transmembrane region" description="Helical" evidence="1">
    <location>
        <begin position="179"/>
        <end position="196"/>
    </location>
</feature>
<feature type="mutagenesis site" description="In c14; gain-of-function mutation. Homozygous lethal, with no survival beyond 5 days post-fertilization (dpf). At 3 dpf, embryos show a range of developmental defects including a shortened and curved body axis, pericardial edema, malformed fin folds and a poorly developed jaw. Heterozygous adults have a fin overgrowth phenotype characterized by increased segment number. In addition, animals develop marked hyperossification of the axial skeleton. At two weeks of age, there is increased expression of genes involved in skeletal development including col2a1, col10a1 and osx." evidence="2 3">
    <original>V</original>
    <variation>E</variation>
    <location>
        <position position="90"/>
    </location>
</feature>
<feature type="sequence conflict" description="In Ref. 1; ACM17386." evidence="5" ref="1">
    <original>H</original>
    <variation>Q</variation>
    <location>
        <position position="169"/>
    </location>
</feature>
<comment type="subcellular location">
    <subcellularLocation>
        <location evidence="1">Membrane</location>
        <topology evidence="1">Single-pass membrane protein</topology>
    </subcellularLocation>
</comment>
<comment type="developmental stage">
    <text evidence="3">At 24 hours post-fertilization (hpf), detected in the somites, tail bud region adjacent to the fin fold, pectoral fin buds and the head. A similar expression pattern is observed at 48 hpf, although levels are reduced. By 120 hpf, expression is almost completely undetectable.</text>
</comment>
<comment type="disruption phenotype">
    <text evidence="3">Morpholino knockdown of the protein has no visible phenotype. Morpholino knockdown in animals homozygous for the c14 allele suppresses the c14 phenotype.</text>
</comment>
<organism evidence="7">
    <name type="scientific">Danio rerio</name>
    <name type="common">Zebrafish</name>
    <name type="synonym">Brachydanio rerio</name>
    <dbReference type="NCBI Taxonomy" id="7955"/>
    <lineage>
        <taxon>Eukaryota</taxon>
        <taxon>Metazoa</taxon>
        <taxon>Chordata</taxon>
        <taxon>Craniata</taxon>
        <taxon>Vertebrata</taxon>
        <taxon>Euteleostomi</taxon>
        <taxon>Actinopterygii</taxon>
        <taxon>Neopterygii</taxon>
        <taxon>Teleostei</taxon>
        <taxon>Ostariophysi</taxon>
        <taxon>Cypriniformes</taxon>
        <taxon>Danionidae</taxon>
        <taxon>Danioninae</taxon>
        <taxon>Danio</taxon>
    </lineage>
</organism>
<dbReference type="EMBL" id="FJ539169">
    <property type="protein sequence ID" value="ACM17386.1"/>
    <property type="molecule type" value="mRNA"/>
</dbReference>
<dbReference type="EMBL" id="CU861453">
    <property type="status" value="NOT_ANNOTATED_CDS"/>
    <property type="molecule type" value="Genomic_DNA"/>
</dbReference>
<dbReference type="RefSeq" id="NP_001138710.1">
    <property type="nucleotide sequence ID" value="NM_001145238.1"/>
</dbReference>
<dbReference type="RefSeq" id="XP_017206792.1">
    <property type="nucleotide sequence ID" value="XM_017351303.1"/>
</dbReference>
<dbReference type="SMR" id="F1QUP1"/>
<dbReference type="FunCoup" id="F1QUP1">
    <property type="interactions" value="118"/>
</dbReference>
<dbReference type="STRING" id="7955.ENSDARP00000110329"/>
<dbReference type="PaxDb" id="7955-ENSDARP00000110329"/>
<dbReference type="Ensembl" id="ENSDART00000130264">
    <property type="protein sequence ID" value="ENSDARP00000110329"/>
    <property type="gene ID" value="ENSDARG00000091161"/>
</dbReference>
<dbReference type="GeneID" id="100002737"/>
<dbReference type="KEGG" id="dre:100002737"/>
<dbReference type="AGR" id="ZFIN:ZDB-GENE-070117-651"/>
<dbReference type="CTD" id="100002737"/>
<dbReference type="ZFIN" id="ZDB-GENE-070117-651">
    <property type="gene designation" value="rpz"/>
</dbReference>
<dbReference type="eggNOG" id="ENOG502QUS6">
    <property type="taxonomic scope" value="Eukaryota"/>
</dbReference>
<dbReference type="HOGENOM" id="CLU_106343_0_0_1"/>
<dbReference type="InParanoid" id="F1QUP1"/>
<dbReference type="OMA" id="QYCHVEE"/>
<dbReference type="OrthoDB" id="9948175at2759"/>
<dbReference type="PhylomeDB" id="F1QUP1"/>
<dbReference type="PRO" id="PR:F1QUP1"/>
<dbReference type="Proteomes" id="UP000000437">
    <property type="component" value="Chromosome 16"/>
</dbReference>
<dbReference type="Bgee" id="ENSDARG00000091161">
    <property type="expression patterns" value="Expressed in muscle tissue and 26 other cell types or tissues"/>
</dbReference>
<dbReference type="GO" id="GO:0016020">
    <property type="term" value="C:membrane"/>
    <property type="evidence" value="ECO:0007669"/>
    <property type="project" value="UniProtKB-SubCell"/>
</dbReference>
<dbReference type="GO" id="GO:0033333">
    <property type="term" value="P:fin development"/>
    <property type="evidence" value="ECO:0000315"/>
    <property type="project" value="ZFIN"/>
</dbReference>
<dbReference type="InterPro" id="IPR039051">
    <property type="entry name" value="SE-CTX-like"/>
</dbReference>
<dbReference type="PANTHER" id="PTHR40472:SF7">
    <property type="entry name" value="PROTEIN RAPUNZEL"/>
    <property type="match status" value="1"/>
</dbReference>
<dbReference type="PANTHER" id="PTHR40472">
    <property type="entry name" value="RICIN B-TYPE LECTIN DOMAIN-CONTAINING PROTEIN"/>
    <property type="match status" value="1"/>
</dbReference>
<evidence type="ECO:0000255" key="1"/>
<evidence type="ECO:0000269" key="2">
    <source>
    </source>
</evidence>
<evidence type="ECO:0000269" key="3">
    <source>
    </source>
</evidence>
<evidence type="ECO:0000303" key="4">
    <source>
    </source>
</evidence>
<evidence type="ECO:0000305" key="5"/>
<evidence type="ECO:0000312" key="6">
    <source>
        <dbReference type="EMBL" id="ACM17386.1"/>
    </source>
</evidence>
<evidence type="ECO:0000312" key="7">
    <source>
        <dbReference type="Proteomes" id="UP000000437"/>
    </source>
</evidence>
<evidence type="ECO:0000312" key="8">
    <source>
        <dbReference type="ZFIN" id="ZDB-GENE-070117-651"/>
    </source>
</evidence>
<accession>F1QUP1</accession>
<accession>B9VEN0</accession>
<name>RPZ_DANRE</name>
<sequence>MADNELFDDPEKLKRGLVKVLECVATISSAAAVVNPIFGVAGSLIRVVLHHVDDEDLQKLKREFGSVNRALDEISQQNRQALLQIRKETVDRQYHEVEENIRHQFRKFMEIMEAKPEHLQRKKEDFVESFINDKDDQNMYTLYDGVMGKRKLFSQPILDVYMKHSQGDHRVMENLCTRLAYLFCIGFIALMGYYGILGDDLESRNEEWEENMRNVQEKMQEVLRSCK</sequence>
<protein>
    <recommendedName>
        <fullName evidence="4">Protein rapunzel</fullName>
    </recommendedName>
</protein>
<proteinExistence type="evidence at protein level"/>
<reference evidence="6" key="1">
    <citation type="journal article" date="2009" name="Dev. Biol.">
        <title>A gain of function mutation causing skeletal overgrowth in the rapunzel mutant.</title>
        <authorList>
            <person name="Green J."/>
            <person name="Taylor J.J."/>
            <person name="Hindes A."/>
            <person name="Johnson S.L."/>
            <person name="Goldsmith M.I."/>
        </authorList>
    </citation>
    <scope>NUCLEOTIDE SEQUENCE [MRNA]</scope>
    <scope>DEVELOPMENTAL STAGE</scope>
    <scope>DISRUPTION PHENOTYPE</scope>
    <scope>MUTAGENESIS OF VAL-90</scope>
</reference>
<reference evidence="7" key="2">
    <citation type="journal article" date="2013" name="Nature">
        <title>The zebrafish reference genome sequence and its relationship to the human genome.</title>
        <authorList>
            <person name="Howe K."/>
            <person name="Clark M.D."/>
            <person name="Torroja C.F."/>
            <person name="Torrance J."/>
            <person name="Berthelot C."/>
            <person name="Muffato M."/>
            <person name="Collins J.E."/>
            <person name="Humphray S."/>
            <person name="McLaren K."/>
            <person name="Matthews L."/>
            <person name="McLaren S."/>
            <person name="Sealy I."/>
            <person name="Caccamo M."/>
            <person name="Churcher C."/>
            <person name="Scott C."/>
            <person name="Barrett J.C."/>
            <person name="Koch R."/>
            <person name="Rauch G.J."/>
            <person name="White S."/>
            <person name="Chow W."/>
            <person name="Kilian B."/>
            <person name="Quintais L.T."/>
            <person name="Guerra-Assuncao J.A."/>
            <person name="Zhou Y."/>
            <person name="Gu Y."/>
            <person name="Yen J."/>
            <person name="Vogel J.H."/>
            <person name="Eyre T."/>
            <person name="Redmond S."/>
            <person name="Banerjee R."/>
            <person name="Chi J."/>
            <person name="Fu B."/>
            <person name="Langley E."/>
            <person name="Maguire S.F."/>
            <person name="Laird G.K."/>
            <person name="Lloyd D."/>
            <person name="Kenyon E."/>
            <person name="Donaldson S."/>
            <person name="Sehra H."/>
            <person name="Almeida-King J."/>
            <person name="Loveland J."/>
            <person name="Trevanion S."/>
            <person name="Jones M."/>
            <person name="Quail M."/>
            <person name="Willey D."/>
            <person name="Hunt A."/>
            <person name="Burton J."/>
            <person name="Sims S."/>
            <person name="McLay K."/>
            <person name="Plumb B."/>
            <person name="Davis J."/>
            <person name="Clee C."/>
            <person name="Oliver K."/>
            <person name="Clark R."/>
            <person name="Riddle C."/>
            <person name="Elliot D."/>
            <person name="Threadgold G."/>
            <person name="Harden G."/>
            <person name="Ware D."/>
            <person name="Begum S."/>
            <person name="Mortimore B."/>
            <person name="Kerry G."/>
            <person name="Heath P."/>
            <person name="Phillimore B."/>
            <person name="Tracey A."/>
            <person name="Corby N."/>
            <person name="Dunn M."/>
            <person name="Johnson C."/>
            <person name="Wood J."/>
            <person name="Clark S."/>
            <person name="Pelan S."/>
            <person name="Griffiths G."/>
            <person name="Smith M."/>
            <person name="Glithero R."/>
            <person name="Howden P."/>
            <person name="Barker N."/>
            <person name="Lloyd C."/>
            <person name="Stevens C."/>
            <person name="Harley J."/>
            <person name="Holt K."/>
            <person name="Panagiotidis G."/>
            <person name="Lovell J."/>
            <person name="Beasley H."/>
            <person name="Henderson C."/>
            <person name="Gordon D."/>
            <person name="Auger K."/>
            <person name="Wright D."/>
            <person name="Collins J."/>
            <person name="Raisen C."/>
            <person name="Dyer L."/>
            <person name="Leung K."/>
            <person name="Robertson L."/>
            <person name="Ambridge K."/>
            <person name="Leongamornlert D."/>
            <person name="McGuire S."/>
            <person name="Gilderthorp R."/>
            <person name="Griffiths C."/>
            <person name="Manthravadi D."/>
            <person name="Nichol S."/>
            <person name="Barker G."/>
            <person name="Whitehead S."/>
            <person name="Kay M."/>
            <person name="Brown J."/>
            <person name="Murnane C."/>
            <person name="Gray E."/>
            <person name="Humphries M."/>
            <person name="Sycamore N."/>
            <person name="Barker D."/>
            <person name="Saunders D."/>
            <person name="Wallis J."/>
            <person name="Babbage A."/>
            <person name="Hammond S."/>
            <person name="Mashreghi-Mohammadi M."/>
            <person name="Barr L."/>
            <person name="Martin S."/>
            <person name="Wray P."/>
            <person name="Ellington A."/>
            <person name="Matthews N."/>
            <person name="Ellwood M."/>
            <person name="Woodmansey R."/>
            <person name="Clark G."/>
            <person name="Cooper J."/>
            <person name="Tromans A."/>
            <person name="Grafham D."/>
            <person name="Skuce C."/>
            <person name="Pandian R."/>
            <person name="Andrews R."/>
            <person name="Harrison E."/>
            <person name="Kimberley A."/>
            <person name="Garnett J."/>
            <person name="Fosker N."/>
            <person name="Hall R."/>
            <person name="Garner P."/>
            <person name="Kelly D."/>
            <person name="Bird C."/>
            <person name="Palmer S."/>
            <person name="Gehring I."/>
            <person name="Berger A."/>
            <person name="Dooley C.M."/>
            <person name="Ersan-Urun Z."/>
            <person name="Eser C."/>
            <person name="Geiger H."/>
            <person name="Geisler M."/>
            <person name="Karotki L."/>
            <person name="Kirn A."/>
            <person name="Konantz J."/>
            <person name="Konantz M."/>
            <person name="Oberlander M."/>
            <person name="Rudolph-Geiger S."/>
            <person name="Teucke M."/>
            <person name="Lanz C."/>
            <person name="Raddatz G."/>
            <person name="Osoegawa K."/>
            <person name="Zhu B."/>
            <person name="Rapp A."/>
            <person name="Widaa S."/>
            <person name="Langford C."/>
            <person name="Yang F."/>
            <person name="Schuster S.C."/>
            <person name="Carter N.P."/>
            <person name="Harrow J."/>
            <person name="Ning Z."/>
            <person name="Herrero J."/>
            <person name="Searle S.M."/>
            <person name="Enright A."/>
            <person name="Geisler R."/>
            <person name="Plasterk R.H."/>
            <person name="Lee C."/>
            <person name="Westerfield M."/>
            <person name="de Jong P.J."/>
            <person name="Zon L.I."/>
            <person name="Postlethwait J.H."/>
            <person name="Nusslein-Volhard C."/>
            <person name="Hubbard T.J."/>
            <person name="Roest Crollius H."/>
            <person name="Rogers J."/>
            <person name="Stemple D.L."/>
        </authorList>
    </citation>
    <scope>NUCLEOTIDE SEQUENCE [LARGE SCALE GENOMIC DNA]</scope>
    <source>
        <strain evidence="7">Tuebingen</strain>
    </source>
</reference>
<reference key="3">
    <citation type="journal article" date="2003" name="Dev. Biol.">
        <title>Saltatory control of isometric growth in the zebrafish caudal fin is disrupted in long fin and rapunzel mutants.</title>
        <authorList>
            <person name="Goldsmith M.I."/>
            <person name="Fisher S."/>
            <person name="Waterman R."/>
            <person name="Johnson S.L."/>
        </authorList>
    </citation>
    <scope>MUTAGENESIS OF VAL-90</scope>
</reference>